<gene>
    <name evidence="1" type="primary">yfeW</name>
    <name type="ordered locus">SPAB_00474</name>
</gene>
<accession>A9N307</accession>
<reference key="1">
    <citation type="submission" date="2007-11" db="EMBL/GenBank/DDBJ databases">
        <authorList>
            <consortium name="The Salmonella enterica serovar Paratyphi B Genome Sequencing Project"/>
            <person name="McClelland M."/>
            <person name="Sanderson E.K."/>
            <person name="Porwollik S."/>
            <person name="Spieth J."/>
            <person name="Clifton W.S."/>
            <person name="Fulton R."/>
            <person name="Cordes M."/>
            <person name="Wollam A."/>
            <person name="Shah N."/>
            <person name="Pepin K."/>
            <person name="Bhonagiri V."/>
            <person name="Nash W."/>
            <person name="Johnson M."/>
            <person name="Thiruvilangam P."/>
            <person name="Wilson R."/>
        </authorList>
    </citation>
    <scope>NUCLEOTIDE SEQUENCE [LARGE SCALE GENOMIC DNA]</scope>
    <source>
        <strain>ATCC BAA-1250 / SPB7</strain>
    </source>
</reference>
<evidence type="ECO:0000255" key="1">
    <source>
        <dbReference type="HAMAP-Rule" id="MF_01034"/>
    </source>
</evidence>
<sequence>MKFTLVATVLLTFSLSAFAVEYPVLTTASPDQVGFDSQKLHRLDGWIQNQIDAGYPSINLLVIKDNHIVLQKAWGYAKKYDGSTLLAHPIRATTNTMYDLASNTKMYATNFALQKLVYEGKIDVNDLVSKYIPGFKDMPGDKIKGKDKLRIIDILHHVAGFPADPQYPNKNVAGKLFSQSKSTTLEMIKKTPLEYQPGSKHIYSDVDYMILGFIIESITAMPLDRYVETTIYKPLGLKHTVFNPLMKGFTPPQIAATELHGNTRDGVIHFPNIRTNTLWGQVHDEKAWYSMGGVSGHAGLFSDTHDMAVLMQVMLNGGGYGNVKLFDDKTVAQFTRRSPEDATFGLGWRVNGNASMTPTFGVLASPQTYGHTGWTGTLTSIDPVNHMAIVILGNRPHSPVANPKVNPNVFVSGLLPAATYGWIVDQIYGSLK</sequence>
<feature type="chain" id="PRO_1000149445" description="Putative D-alanyl-D-alanine carboxypeptidase">
    <location>
        <begin position="1"/>
        <end position="432"/>
    </location>
</feature>
<feature type="transmembrane region" description="Helical; Signal-anchor" evidence="1">
    <location>
        <begin position="7"/>
        <end position="25"/>
    </location>
</feature>
<keyword id="KW-0121">Carboxypeptidase</keyword>
<keyword id="KW-0997">Cell inner membrane</keyword>
<keyword id="KW-1003">Cell membrane</keyword>
<keyword id="KW-0378">Hydrolase</keyword>
<keyword id="KW-0472">Membrane</keyword>
<keyword id="KW-0645">Protease</keyword>
<keyword id="KW-0812">Transmembrane</keyword>
<keyword id="KW-1133">Transmembrane helix</keyword>
<proteinExistence type="inferred from homology"/>
<comment type="catalytic activity">
    <reaction evidence="1">
        <text>Preferential cleavage: (Ac)2-L-Lys-D-Ala-|-D-Ala. Also transpeptidation of peptidyl-alanyl moieties that are N-acyl substituents of D-alanine.</text>
        <dbReference type="EC" id="3.4.16.4"/>
    </reaction>
</comment>
<comment type="subcellular location">
    <subcellularLocation>
        <location evidence="1">Cell inner membrane</location>
        <topology evidence="1">Single-pass membrane protein</topology>
    </subcellularLocation>
</comment>
<comment type="similarity">
    <text evidence="1">Belongs to the peptidase S12 family. YfeW subfamily.</text>
</comment>
<name>YFEW_SALPB</name>
<protein>
    <recommendedName>
        <fullName evidence="1">Putative D-alanyl-D-alanine carboxypeptidase</fullName>
        <ecNumber evidence="1">3.4.16.4</ecNumber>
    </recommendedName>
    <alternativeName>
        <fullName evidence="1">DD-carboxypeptidase</fullName>
        <shortName evidence="1">DD-CPase</shortName>
    </alternativeName>
</protein>
<dbReference type="EC" id="3.4.16.4" evidence="1"/>
<dbReference type="EMBL" id="CP000886">
    <property type="protein sequence ID" value="ABX65907.1"/>
    <property type="molecule type" value="Genomic_DNA"/>
</dbReference>
<dbReference type="SMR" id="A9N307"/>
<dbReference type="MEROPS" id="S12.A03"/>
<dbReference type="KEGG" id="spq:SPAB_00474"/>
<dbReference type="PATRIC" id="fig|1016998.12.peg.448"/>
<dbReference type="HOGENOM" id="CLU_020027_1_2_6"/>
<dbReference type="BioCyc" id="SENT1016998:SPAB_RS01925-MONOMER"/>
<dbReference type="Proteomes" id="UP000008556">
    <property type="component" value="Chromosome"/>
</dbReference>
<dbReference type="GO" id="GO:0005886">
    <property type="term" value="C:plasma membrane"/>
    <property type="evidence" value="ECO:0007669"/>
    <property type="project" value="UniProtKB-SubCell"/>
</dbReference>
<dbReference type="GO" id="GO:0009002">
    <property type="term" value="F:serine-type D-Ala-D-Ala carboxypeptidase activity"/>
    <property type="evidence" value="ECO:0007669"/>
    <property type="project" value="UniProtKB-UniRule"/>
</dbReference>
<dbReference type="GO" id="GO:0006508">
    <property type="term" value="P:proteolysis"/>
    <property type="evidence" value="ECO:0007669"/>
    <property type="project" value="UniProtKB-KW"/>
</dbReference>
<dbReference type="Gene3D" id="3.40.710.10">
    <property type="entry name" value="DD-peptidase/beta-lactamase superfamily"/>
    <property type="match status" value="1"/>
</dbReference>
<dbReference type="HAMAP" id="MF_01034">
    <property type="entry name" value="S12_YfeW"/>
    <property type="match status" value="1"/>
</dbReference>
<dbReference type="InterPro" id="IPR001466">
    <property type="entry name" value="Beta-lactam-related"/>
</dbReference>
<dbReference type="InterPro" id="IPR012338">
    <property type="entry name" value="Beta-lactam/transpept-like"/>
</dbReference>
<dbReference type="InterPro" id="IPR050789">
    <property type="entry name" value="Diverse_Enzym_Activities"/>
</dbReference>
<dbReference type="InterPro" id="IPR022849">
    <property type="entry name" value="Pept_S12_YfeW/YbbE-like"/>
</dbReference>
<dbReference type="NCBIfam" id="NF002968">
    <property type="entry name" value="PRK03642.1"/>
    <property type="match status" value="1"/>
</dbReference>
<dbReference type="PANTHER" id="PTHR43283">
    <property type="entry name" value="BETA-LACTAMASE-RELATED"/>
    <property type="match status" value="1"/>
</dbReference>
<dbReference type="PANTHER" id="PTHR43283:SF11">
    <property type="entry name" value="BETA-LACTAMASE-RELATED DOMAIN-CONTAINING PROTEIN"/>
    <property type="match status" value="1"/>
</dbReference>
<dbReference type="Pfam" id="PF00144">
    <property type="entry name" value="Beta-lactamase"/>
    <property type="match status" value="1"/>
</dbReference>
<dbReference type="SUPFAM" id="SSF56601">
    <property type="entry name" value="beta-lactamase/transpeptidase-like"/>
    <property type="match status" value="1"/>
</dbReference>
<organism>
    <name type="scientific">Salmonella paratyphi B (strain ATCC BAA-1250 / SPB7)</name>
    <dbReference type="NCBI Taxonomy" id="1016998"/>
    <lineage>
        <taxon>Bacteria</taxon>
        <taxon>Pseudomonadati</taxon>
        <taxon>Pseudomonadota</taxon>
        <taxon>Gammaproteobacteria</taxon>
        <taxon>Enterobacterales</taxon>
        <taxon>Enterobacteriaceae</taxon>
        <taxon>Salmonella</taxon>
    </lineage>
</organism>